<proteinExistence type="evidence at transcript level"/>
<protein>
    <recommendedName>
        <fullName>Zinc finger protein ubi-d4 B</fullName>
    </recommendedName>
    <alternativeName>
        <fullName>Apoptosis response zinc finger protein B</fullName>
    </alternativeName>
    <alternativeName>
        <fullName>Protein requiem B</fullName>
        <shortName>xReq B</shortName>
    </alternativeName>
</protein>
<sequence>HNYNARLCAERSVRMPFLDSQTGVAQSNCYIWMEKRHRGQASAPGQLYTYPSRRWRKKRRAHPPEDPRLSFPSLKPDPEQMLKKEGLIPPDGSSLEALLRSDPIEKRIIPDPRDDDSLTEFPTLSRSARKRILEPDDFLDDLDDEDYEEDTPKRRKGKSKGKGIGGARKKLDAAALDDRDKPYACDICGKRYKNRPGLSYHYAHSHLVDEEGAGAEDKEDSQPPTPIMHRSEEQKSKKGPDGLALPNNYCDFCLGDSNTNKKSNQPEELVSCSDCGRSGHPSCLQFTPVMMAAVKTYRWQCIECKCCNICGTSENDDQLLFCDDCDRGYHMYCLSPPVAEPPEGSWSCHLCLDLLKDKASIYQKQS</sequence>
<evidence type="ECO:0000250" key="1"/>
<evidence type="ECO:0000255" key="2">
    <source>
        <dbReference type="PROSITE-ProRule" id="PRU00042"/>
    </source>
</evidence>
<evidence type="ECO:0000255" key="3">
    <source>
        <dbReference type="PROSITE-ProRule" id="PRU00146"/>
    </source>
</evidence>
<evidence type="ECO:0000256" key="4">
    <source>
        <dbReference type="SAM" id="MobiDB-lite"/>
    </source>
</evidence>
<evidence type="ECO:0000305" key="5"/>
<keyword id="KW-0053">Apoptosis</keyword>
<keyword id="KW-0963">Cytoplasm</keyword>
<keyword id="KW-0479">Metal-binding</keyword>
<keyword id="KW-0539">Nucleus</keyword>
<keyword id="KW-1185">Reference proteome</keyword>
<keyword id="KW-0677">Repeat</keyword>
<keyword id="KW-0804">Transcription</keyword>
<keyword id="KW-0805">Transcription regulation</keyword>
<keyword id="KW-0862">Zinc</keyword>
<keyword id="KW-0863">Zinc-finger</keyword>
<dbReference type="EMBL" id="AB021738">
    <property type="protein sequence ID" value="BAA77571.1"/>
    <property type="molecule type" value="mRNA"/>
</dbReference>
<dbReference type="EMBL" id="AB021740">
    <property type="protein sequence ID" value="BAA77573.1"/>
    <property type="molecule type" value="mRNA"/>
</dbReference>
<dbReference type="EMBL" id="AB021739">
    <property type="protein sequence ID" value="BAA77572.1"/>
    <property type="molecule type" value="mRNA"/>
</dbReference>
<dbReference type="SMR" id="Q9W636"/>
<dbReference type="AGR" id="Xenbase:XB-GENE-17339256"/>
<dbReference type="Xenbase" id="XB-GENE-17339256">
    <property type="gene designation" value="dpf2.S"/>
</dbReference>
<dbReference type="Proteomes" id="UP000186698">
    <property type="component" value="Unplaced"/>
</dbReference>
<dbReference type="GO" id="GO:0005737">
    <property type="term" value="C:cytoplasm"/>
    <property type="evidence" value="ECO:0007669"/>
    <property type="project" value="UniProtKB-SubCell"/>
</dbReference>
<dbReference type="GO" id="GO:0071565">
    <property type="term" value="C:nBAF complex"/>
    <property type="evidence" value="ECO:0000318"/>
    <property type="project" value="GO_Central"/>
</dbReference>
<dbReference type="GO" id="GO:0008270">
    <property type="term" value="F:zinc ion binding"/>
    <property type="evidence" value="ECO:0007669"/>
    <property type="project" value="UniProtKB-KW"/>
</dbReference>
<dbReference type="GO" id="GO:0006915">
    <property type="term" value="P:apoptotic process"/>
    <property type="evidence" value="ECO:0007669"/>
    <property type="project" value="UniProtKB-KW"/>
</dbReference>
<dbReference type="GO" id="GO:0007399">
    <property type="term" value="P:nervous system development"/>
    <property type="evidence" value="ECO:0000318"/>
    <property type="project" value="GO_Central"/>
</dbReference>
<dbReference type="CDD" id="cd15691">
    <property type="entry name" value="PHD1_DPF2_like"/>
    <property type="match status" value="1"/>
</dbReference>
<dbReference type="CDD" id="cd15530">
    <property type="entry name" value="PHD2_d4"/>
    <property type="match status" value="1"/>
</dbReference>
<dbReference type="FunFam" id="3.30.40.10:FF:000005">
    <property type="entry name" value="zinc finger protein isoform X1"/>
    <property type="match status" value="1"/>
</dbReference>
<dbReference type="Gene3D" id="3.30.40.10">
    <property type="entry name" value="Zinc/RING finger domain, C3HC4 (zinc finger)"/>
    <property type="match status" value="1"/>
</dbReference>
<dbReference type="InterPro" id="IPR025750">
    <property type="entry name" value="DPF1-3_N"/>
</dbReference>
<dbReference type="InterPro" id="IPR036236">
    <property type="entry name" value="Znf_C2H2_sf"/>
</dbReference>
<dbReference type="InterPro" id="IPR013087">
    <property type="entry name" value="Znf_C2H2_type"/>
</dbReference>
<dbReference type="InterPro" id="IPR011011">
    <property type="entry name" value="Znf_FYVE_PHD"/>
</dbReference>
<dbReference type="InterPro" id="IPR001965">
    <property type="entry name" value="Znf_PHD"/>
</dbReference>
<dbReference type="InterPro" id="IPR019787">
    <property type="entry name" value="Znf_PHD-finger"/>
</dbReference>
<dbReference type="InterPro" id="IPR013083">
    <property type="entry name" value="Znf_RING/FYVE/PHD"/>
</dbReference>
<dbReference type="PANTHER" id="PTHR45888">
    <property type="entry name" value="HL01030P-RELATED"/>
    <property type="match status" value="1"/>
</dbReference>
<dbReference type="PANTHER" id="PTHR45888:SF7">
    <property type="entry name" value="ZINC FINGER PROTEIN UBI-D4"/>
    <property type="match status" value="1"/>
</dbReference>
<dbReference type="Pfam" id="PF14051">
    <property type="entry name" value="DPF1-3_N"/>
    <property type="match status" value="1"/>
</dbReference>
<dbReference type="Pfam" id="PF00628">
    <property type="entry name" value="PHD"/>
    <property type="match status" value="2"/>
</dbReference>
<dbReference type="SMART" id="SM00249">
    <property type="entry name" value="PHD"/>
    <property type="match status" value="2"/>
</dbReference>
<dbReference type="SMART" id="SM00355">
    <property type="entry name" value="ZnF_C2H2"/>
    <property type="match status" value="1"/>
</dbReference>
<dbReference type="SUPFAM" id="SSF57667">
    <property type="entry name" value="beta-beta-alpha zinc fingers"/>
    <property type="match status" value="1"/>
</dbReference>
<dbReference type="SUPFAM" id="SSF57903">
    <property type="entry name" value="FYVE/PHD zinc finger"/>
    <property type="match status" value="2"/>
</dbReference>
<dbReference type="PROSITE" id="PS01359">
    <property type="entry name" value="ZF_PHD_1"/>
    <property type="match status" value="1"/>
</dbReference>
<dbReference type="PROSITE" id="PS50016">
    <property type="entry name" value="ZF_PHD_2"/>
    <property type="match status" value="2"/>
</dbReference>
<dbReference type="PROSITE" id="PS00028">
    <property type="entry name" value="ZINC_FINGER_C2H2_1"/>
    <property type="match status" value="1"/>
</dbReference>
<dbReference type="PROSITE" id="PS50157">
    <property type="entry name" value="ZINC_FINGER_C2H2_2"/>
    <property type="match status" value="1"/>
</dbReference>
<accession>Q9W636</accession>
<accession>Q9PWJ7</accession>
<accession>Q9W637</accession>
<comment type="function">
    <text>May be a transcription factor required for the apoptosis response following survival factor withdrawal from myeloid cells. Might also have a role in the development and maturation of lymphoid cells.</text>
</comment>
<comment type="subcellular location">
    <subcellularLocation>
        <location evidence="1">Cytoplasm</location>
    </subcellularLocation>
    <subcellularLocation>
        <location evidence="1">Nucleus</location>
    </subcellularLocation>
</comment>
<comment type="similarity">
    <text evidence="5">Belongs to the requiem/DPF family.</text>
</comment>
<gene>
    <name type="primary">req-b</name>
    <name type="synonym">req2</name>
</gene>
<organism>
    <name type="scientific">Xenopus laevis</name>
    <name type="common">African clawed frog</name>
    <dbReference type="NCBI Taxonomy" id="8355"/>
    <lineage>
        <taxon>Eukaryota</taxon>
        <taxon>Metazoa</taxon>
        <taxon>Chordata</taxon>
        <taxon>Craniata</taxon>
        <taxon>Vertebrata</taxon>
        <taxon>Euteleostomi</taxon>
        <taxon>Amphibia</taxon>
        <taxon>Batrachia</taxon>
        <taxon>Anura</taxon>
        <taxon>Pipoidea</taxon>
        <taxon>Pipidae</taxon>
        <taxon>Xenopodinae</taxon>
        <taxon>Xenopus</taxon>
        <taxon>Xenopus</taxon>
    </lineage>
</organism>
<name>REQUB_XENLA</name>
<reference key="1">
    <citation type="journal article" date="1999" name="Biochim. Biophys. Acta">
        <title>Molecular cloning and expression of Xenopus laevis Requiem cDNA.</title>
        <authorList>
            <person name="Konishi M."/>
            <person name="Hiraoka Y."/>
            <person name="Ogawa M."/>
            <person name="Sakai Y."/>
            <person name="Ishii H."/>
            <person name="Aiso S."/>
        </authorList>
    </citation>
    <scope>NUCLEOTIDE SEQUENCE [MRNA]</scope>
    <source>
        <tissue>Ovary</tissue>
    </source>
</reference>
<feature type="chain" id="PRO_0000168153" description="Zinc finger protein ubi-d4 B">
    <location>
        <begin position="1" status="less than"/>
        <end position="366"/>
    </location>
</feature>
<feature type="zinc finger region" description="C2H2-type" evidence="2">
    <location>
        <begin position="183"/>
        <end position="206"/>
    </location>
</feature>
<feature type="zinc finger region" description="PHD-type 1" evidence="3">
    <location>
        <begin position="247"/>
        <end position="307"/>
    </location>
</feature>
<feature type="zinc finger region" description="PHD-type 2" evidence="3">
    <location>
        <begin position="304"/>
        <end position="354"/>
    </location>
</feature>
<feature type="region of interest" description="Disordered" evidence="4">
    <location>
        <begin position="41"/>
        <end position="94"/>
    </location>
</feature>
<feature type="region of interest" description="Disordered" evidence="4">
    <location>
        <begin position="140"/>
        <end position="167"/>
    </location>
</feature>
<feature type="region of interest" description="Disordered" evidence="4">
    <location>
        <begin position="211"/>
        <end position="243"/>
    </location>
</feature>
<feature type="compositionally biased region" description="Basic and acidic residues" evidence="4">
    <location>
        <begin position="76"/>
        <end position="86"/>
    </location>
</feature>
<feature type="compositionally biased region" description="Acidic residues" evidence="4">
    <location>
        <begin position="140"/>
        <end position="149"/>
    </location>
</feature>
<feature type="compositionally biased region" description="Basic and acidic residues" evidence="4">
    <location>
        <begin position="229"/>
        <end position="240"/>
    </location>
</feature>
<feature type="sequence conflict" description="In Ref. 1; BAA77573." evidence="5" ref="1">
    <original>A</original>
    <variation>S</variation>
    <location>
        <position position="174"/>
    </location>
</feature>
<feature type="sequence conflict" description="In Ref. 1; BAA77572." evidence="5" ref="1">
    <original>DQLLFCDDCDRGYHMYCLSPPVAEPPEGSWSCHLCLDLLKDKASIYQKQS</original>
    <variation>CSELPVSVGSVAVL</variation>
    <location>
        <begin position="317"/>
        <end position="366"/>
    </location>
</feature>
<feature type="non-terminal residue">
    <location>
        <position position="1"/>
    </location>
</feature>